<gene>
    <name evidence="4" type="primary">hylB</name>
    <name type="ordered locus">PPA0380</name>
</gene>
<dbReference type="EC" id="4.2.2.1" evidence="1"/>
<dbReference type="EMBL" id="AE017283">
    <property type="protein sequence ID" value="AAT82132.1"/>
    <property type="molecule type" value="Genomic_DNA"/>
</dbReference>
<dbReference type="SMR" id="P0CZ01"/>
<dbReference type="CAZy" id="PL8">
    <property type="family name" value="Polysaccharide Lyase Family 8"/>
</dbReference>
<dbReference type="EnsemblBacteria" id="AAT82132">
    <property type="protein sequence ID" value="AAT82132"/>
    <property type="gene ID" value="PPA0380"/>
</dbReference>
<dbReference type="KEGG" id="pac:PPA0380"/>
<dbReference type="eggNOG" id="COG5492">
    <property type="taxonomic scope" value="Bacteria"/>
</dbReference>
<dbReference type="HOGENOM" id="CLU_004172_4_1_11"/>
<dbReference type="BRENDA" id="4.2.2.1">
    <property type="organism ID" value="5029"/>
</dbReference>
<dbReference type="Proteomes" id="UP000000603">
    <property type="component" value="Chromosome"/>
</dbReference>
<dbReference type="GO" id="GO:0005576">
    <property type="term" value="C:extracellular region"/>
    <property type="evidence" value="ECO:0000250"/>
    <property type="project" value="UniProtKB"/>
</dbReference>
<dbReference type="GO" id="GO:0030246">
    <property type="term" value="F:carbohydrate binding"/>
    <property type="evidence" value="ECO:0007669"/>
    <property type="project" value="InterPro"/>
</dbReference>
<dbReference type="GO" id="GO:0030340">
    <property type="term" value="F:hyaluronate lyase activity"/>
    <property type="evidence" value="ECO:0000250"/>
    <property type="project" value="UniProtKB"/>
</dbReference>
<dbReference type="GO" id="GO:0005975">
    <property type="term" value="P:carbohydrate metabolic process"/>
    <property type="evidence" value="ECO:0007669"/>
    <property type="project" value="InterPro"/>
</dbReference>
<dbReference type="CDD" id="cd01083">
    <property type="entry name" value="GAG_Lyase"/>
    <property type="match status" value="1"/>
</dbReference>
<dbReference type="Gene3D" id="2.70.98.10">
    <property type="match status" value="1"/>
</dbReference>
<dbReference type="Gene3D" id="1.50.10.100">
    <property type="entry name" value="Chondroitin AC/alginate lyase"/>
    <property type="match status" value="1"/>
</dbReference>
<dbReference type="Gene3D" id="2.60.220.10">
    <property type="entry name" value="Polysaccharide lyase family 8-like, C-terminal"/>
    <property type="match status" value="1"/>
</dbReference>
<dbReference type="InterPro" id="IPR008929">
    <property type="entry name" value="Chondroitin_lyas"/>
</dbReference>
<dbReference type="InterPro" id="IPR011013">
    <property type="entry name" value="Gal_mutarotase_sf_dom"/>
</dbReference>
<dbReference type="InterPro" id="IPR014718">
    <property type="entry name" value="GH-type_carb-bd"/>
</dbReference>
<dbReference type="InterPro" id="IPR038970">
    <property type="entry name" value="Lyase_8"/>
</dbReference>
<dbReference type="InterPro" id="IPR011071">
    <property type="entry name" value="Lyase_8-like_C"/>
</dbReference>
<dbReference type="InterPro" id="IPR012970">
    <property type="entry name" value="Lyase_8_alpha_N"/>
</dbReference>
<dbReference type="InterPro" id="IPR004103">
    <property type="entry name" value="Lyase_8_C"/>
</dbReference>
<dbReference type="InterPro" id="IPR003159">
    <property type="entry name" value="Lyase_8_central_dom"/>
</dbReference>
<dbReference type="InterPro" id="IPR006311">
    <property type="entry name" value="TAT_signal"/>
</dbReference>
<dbReference type="PANTHER" id="PTHR38481">
    <property type="entry name" value="HYALURONATE LYASE"/>
    <property type="match status" value="1"/>
</dbReference>
<dbReference type="PANTHER" id="PTHR38481:SF1">
    <property type="entry name" value="HYALURONATE LYASE"/>
    <property type="match status" value="1"/>
</dbReference>
<dbReference type="Pfam" id="PF02278">
    <property type="entry name" value="Lyase_8"/>
    <property type="match status" value="1"/>
</dbReference>
<dbReference type="Pfam" id="PF02884">
    <property type="entry name" value="Lyase_8_C"/>
    <property type="match status" value="1"/>
</dbReference>
<dbReference type="Pfam" id="PF08124">
    <property type="entry name" value="Lyase_8_N"/>
    <property type="match status" value="1"/>
</dbReference>
<dbReference type="SUPFAM" id="SSF48230">
    <property type="entry name" value="Chondroitin AC/alginate lyase"/>
    <property type="match status" value="1"/>
</dbReference>
<dbReference type="SUPFAM" id="SSF74650">
    <property type="entry name" value="Galactose mutarotase-like"/>
    <property type="match status" value="1"/>
</dbReference>
<dbReference type="SUPFAM" id="SSF49863">
    <property type="entry name" value="Hyaluronate lyase-like, C-terminal domain"/>
    <property type="match status" value="1"/>
</dbReference>
<dbReference type="PROSITE" id="PS51318">
    <property type="entry name" value="TAT"/>
    <property type="match status" value="1"/>
</dbReference>
<keyword id="KW-0456">Lyase</keyword>
<keyword id="KW-0964">Secreted</keyword>
<keyword id="KW-0732">Signal</keyword>
<feature type="signal peptide" description="Tat-type signal" evidence="3">
    <location>
        <begin position="1"/>
        <end position="32"/>
    </location>
</feature>
<feature type="chain" id="PRO_0000024930" description="Hyaluronate lyase HylB">
    <location>
        <begin position="33"/>
        <end position="813"/>
    </location>
</feature>
<feature type="active site" evidence="2">
    <location>
        <position position="222"/>
    </location>
</feature>
<feature type="active site" evidence="2">
    <location>
        <position position="272"/>
    </location>
</feature>
<feature type="active site" evidence="1">
    <location>
        <position position="281"/>
    </location>
</feature>
<organism>
    <name type="scientific">Cutibacterium acnes (strain DSM 16379 / KPA171202)</name>
    <name type="common">Propionibacterium acnes</name>
    <dbReference type="NCBI Taxonomy" id="267747"/>
    <lineage>
        <taxon>Bacteria</taxon>
        <taxon>Bacillati</taxon>
        <taxon>Actinomycetota</taxon>
        <taxon>Actinomycetes</taxon>
        <taxon>Propionibacteriales</taxon>
        <taxon>Propionibacteriaceae</taxon>
        <taxon>Cutibacterium</taxon>
    </lineage>
</organism>
<reference key="1">
    <citation type="journal article" date="2004" name="Science">
        <title>The complete genome sequence of Propionibacterium acnes, a commensal of human skin.</title>
        <authorList>
            <person name="Brueggemann H."/>
            <person name="Henne A."/>
            <person name="Hoster F."/>
            <person name="Liesegang H."/>
            <person name="Wiezer A."/>
            <person name="Strittmatter A."/>
            <person name="Hujer S."/>
            <person name="Duerre P."/>
            <person name="Gottschalk G."/>
        </authorList>
    </citation>
    <scope>NUCLEOTIDE SEQUENCE [LARGE SCALE GENOMIC DNA]</scope>
    <source>
        <strain>DSM 16379 / KPA171202</strain>
    </source>
</reference>
<name>HYLB_CUTAK</name>
<evidence type="ECO:0000250" key="1">
    <source>
        <dbReference type="UniProtKB" id="P0CZ00"/>
    </source>
</evidence>
<evidence type="ECO:0000250" key="2">
    <source>
        <dbReference type="UniProtKB" id="Q54873"/>
    </source>
</evidence>
<evidence type="ECO:0000255" key="3">
    <source>
        <dbReference type="PROSITE-ProRule" id="PRU00648"/>
    </source>
</evidence>
<evidence type="ECO:0000305" key="4"/>
<sequence length="813" mass="88130">MFGTPSRRTFLTASALSAMALAASPTVTDAIAAPGPDSWSALCERWIDIITGRRAARTSDPRARAIIAKTDRKVAEILTDLVSGSSRQTVLISADLRKEQSPFITKTARAIESMACAWATPGSSYHKDPEILSACIEGLRDFCRLRYNPSQDEYGNWWDWEDGASRAVADVMCILHDVLPPEVMSAAAAGIDHFIPDPWFQQPASVKPTANPVQPVVSTGANRMDLTRAVMCRSIATGDEKRLRHAVDGLPDAWRVTTEGDGFRADGGFIQHSHIPYTGGYGDVLFSGLAMLFPLVSGMRFDIVESARKAFHDQVERGFIPVMYNGQILDDVRGRSISRINESAAMHGISIARAMLMMADALPTHRAEQWRGIVHGWMARNTFDHLSEPSTLVDISLFDAAAKARPVPESSTPSYFASMDRLVHRTADWLITVSNCSDRIAWYEYGNGENEWASRTSQGMRYLLLPGDMGQYEDGYWATVDYSAPTGTTVDSTPLKRAVGASWAAKTPTNEWSGGLASGSWSAAASHITSQDSALKARRLWVGLKDAMVELTTDVTTDASRAITVVEHRKVASSSTKLLVDGNRVSSATSFQNPRWAHLDGVGGYVFATDTDLSADVATRKGTWIDVNPSRKVKGADEVIERAYASLHVTHHDRPVAWALLPTASRSHTMALATRPGVEPFTVLRNDATVQAVRSAGALLTKDPTVVTTLAFWKPATCGGVAVNRPALVQTRESANQMEVVIVEPTQKRGSLTVTIEGSWKVKTADSHVDVSCENAAGTLHVDTAGLGGQSVRVTLARQVTQTPSGGGRHDRA</sequence>
<comment type="function">
    <text evidence="1">Degrades hyaluronic acid (HA) exclusively into HA disaccharides (HA-2). Produced HA-2s confer anti-inflammatory properties leading to reduced immunopathology in the mouse model of acne.</text>
</comment>
<comment type="catalytic activity">
    <reaction evidence="1">
        <text>[hyaluronan](n) = n 3-(4-deoxy-beta-D-gluc-4-enuronosyl)-N-acetyl-D-glucosamine + H2O</text>
        <dbReference type="Rhea" id="RHEA:50240"/>
        <dbReference type="Rhea" id="RHEA-COMP:12583"/>
        <dbReference type="ChEBI" id="CHEBI:15377"/>
        <dbReference type="ChEBI" id="CHEBI:132151"/>
        <dbReference type="ChEBI" id="CHEBI:132153"/>
        <dbReference type="EC" id="4.2.2.1"/>
    </reaction>
</comment>
<comment type="subcellular location">
    <subcellularLocation>
        <location evidence="1">Secreted</location>
    </subcellularLocation>
</comment>
<comment type="PTM">
    <text evidence="3">Predicted to be exported by the Tat system. The position of the signal peptide cleavage has not been experimentally proven.</text>
</comment>
<comment type="similarity">
    <text evidence="4">Belongs to the polysaccharide lyase 8 family.</text>
</comment>
<proteinExistence type="inferred from homology"/>
<protein>
    <recommendedName>
        <fullName evidence="4">Hyaluronate lyase HylB</fullName>
        <ecNumber evidence="1">4.2.2.1</ecNumber>
    </recommendedName>
    <alternativeName>
        <fullName evidence="4">Hyaluronidase</fullName>
        <shortName>HYase</shortName>
    </alternativeName>
</protein>
<accession>P0CZ01</accession>
<accession>Q59634</accession>
<accession>Q6AAT4</accession>